<dbReference type="EC" id="1.97.1.9" evidence="5"/>
<dbReference type="EMBL" id="AJ007744">
    <property type="protein sequence ID" value="CAB53373.1"/>
    <property type="molecule type" value="Genomic_DNA"/>
</dbReference>
<dbReference type="SMR" id="Q9S1G9"/>
<dbReference type="TCDB" id="5.A.3.8.1">
    <property type="family name" value="the prokaryotic molybdopterin-containing oxidoreductase (pmo) family"/>
</dbReference>
<dbReference type="KEGG" id="ag:CAB53373"/>
<dbReference type="BRENDA" id="1.97.1.9">
    <property type="organism ID" value="6272"/>
</dbReference>
<dbReference type="GO" id="GO:0016020">
    <property type="term" value="C:membrane"/>
    <property type="evidence" value="ECO:0007669"/>
    <property type="project" value="TreeGrafter"/>
</dbReference>
<dbReference type="GO" id="GO:0042597">
    <property type="term" value="C:periplasmic space"/>
    <property type="evidence" value="ECO:0007669"/>
    <property type="project" value="UniProtKB-SubCell"/>
</dbReference>
<dbReference type="GO" id="GO:0051538">
    <property type="term" value="F:3 iron, 4 sulfur cluster binding"/>
    <property type="evidence" value="ECO:0007669"/>
    <property type="project" value="UniProtKB-KW"/>
</dbReference>
<dbReference type="GO" id="GO:0051539">
    <property type="term" value="F:4 iron, 4 sulfur cluster binding"/>
    <property type="evidence" value="ECO:0007669"/>
    <property type="project" value="UniProtKB-KW"/>
</dbReference>
<dbReference type="GO" id="GO:0009055">
    <property type="term" value="F:electron transfer activity"/>
    <property type="evidence" value="ECO:0007669"/>
    <property type="project" value="TreeGrafter"/>
</dbReference>
<dbReference type="GO" id="GO:0046872">
    <property type="term" value="F:metal ion binding"/>
    <property type="evidence" value="ECO:0007669"/>
    <property type="project" value="UniProtKB-KW"/>
</dbReference>
<dbReference type="GO" id="GO:0033797">
    <property type="term" value="F:selenate reductase activity"/>
    <property type="evidence" value="ECO:0007669"/>
    <property type="project" value="UniProtKB-EC"/>
</dbReference>
<dbReference type="GO" id="GO:0009061">
    <property type="term" value="P:anaerobic respiration"/>
    <property type="evidence" value="ECO:0007669"/>
    <property type="project" value="InterPro"/>
</dbReference>
<dbReference type="CDD" id="cd10555">
    <property type="entry name" value="EBDH_beta"/>
    <property type="match status" value="1"/>
</dbReference>
<dbReference type="Gene3D" id="3.30.70.20">
    <property type="match status" value="4"/>
</dbReference>
<dbReference type="InterPro" id="IPR017896">
    <property type="entry name" value="4Fe4S_Fe-S-bd"/>
</dbReference>
<dbReference type="InterPro" id="IPR017839">
    <property type="entry name" value="DMSO_Rdtase_II_Fe-S_su"/>
</dbReference>
<dbReference type="NCBIfam" id="TIGR03478">
    <property type="entry name" value="DMSO_red_II_bet"/>
    <property type="match status" value="1"/>
</dbReference>
<dbReference type="PANTHER" id="PTHR43518">
    <property type="entry name" value="NITRATE REDUCTASE BETA SUBUNIT"/>
    <property type="match status" value="1"/>
</dbReference>
<dbReference type="PANTHER" id="PTHR43518:SF1">
    <property type="entry name" value="RESPIRATORY NITRATE REDUCTASE 1 BETA CHAIN"/>
    <property type="match status" value="1"/>
</dbReference>
<dbReference type="Pfam" id="PF13247">
    <property type="entry name" value="Fer4_11"/>
    <property type="match status" value="1"/>
</dbReference>
<dbReference type="Pfam" id="PF12797">
    <property type="entry name" value="Fer4_2"/>
    <property type="match status" value="1"/>
</dbReference>
<dbReference type="SUPFAM" id="SSF54862">
    <property type="entry name" value="4Fe-4S ferredoxins"/>
    <property type="match status" value="1"/>
</dbReference>
<dbReference type="PROSITE" id="PS51379">
    <property type="entry name" value="4FE4S_FER_2"/>
    <property type="match status" value="3"/>
</dbReference>
<reference key="1">
    <citation type="journal article" date="2000" name="DNA Seq.">
        <title>Cloning and sequencing of the genes encoding the periplasmic-cytochrome B-containing selenate reductase of Thauera selenatis.</title>
        <authorList>
            <person name="Krafft T."/>
            <person name="Bowen A."/>
            <person name="Theis F."/>
            <person name="Macy J.M."/>
        </authorList>
    </citation>
    <scope>NUCLEOTIDE SEQUENCE [GENOMIC DNA]</scope>
    <scope>SUBUNIT</scope>
</reference>
<reference key="2">
    <citation type="journal article" date="1997" name="J. Biol. Chem.">
        <title>Purification and characterization of the selenate reductase from Thauera selenatis.</title>
        <authorList>
            <person name="Schroeder I."/>
            <person name="Rech S."/>
            <person name="Krafft T."/>
            <person name="Macy J.M."/>
        </authorList>
    </citation>
    <scope>PROTEIN SEQUENCE OF 2-31</scope>
    <scope>FUNCTION</scope>
    <scope>BIOPHYSICOCHEMICAL PROPERTIES</scope>
    <scope>SUBUNIT</scope>
    <scope>SUBCELLULAR LOCATION</scope>
</reference>
<reference key="3">
    <citation type="journal article" date="2002" name="Acta Crystallogr. D">
        <title>Crystallization and preliminary X-ray analysis of the selenate reductase from Thauera selenatis.</title>
        <authorList>
            <person name="Maher M.J."/>
            <person name="Macy J.M."/>
        </authorList>
    </citation>
    <scope>SUBCELLULAR LOCATION</scope>
    <scope>CRYSTALLIZATION</scope>
</reference>
<reference key="4">
    <citation type="journal article" date="2010" name="Biochimie">
        <title>Thermostable properties of the periplasmic selenate reductase from Thauera selenatis.</title>
        <authorList>
            <person name="Dridge E.J."/>
            <person name="Butler C.S."/>
        </authorList>
    </citation>
    <scope>FUNCTION</scope>
    <scope>ACTIVITY REGULATION</scope>
    <scope>BIOPHYSICOCHEMICAL PROPERTIES</scope>
    <scope>SUBUNIT</scope>
    <scope>SUBCELLULAR LOCATION</scope>
</reference>
<reference key="5">
    <citation type="journal article" date="2010" name="J. Biol. Chem.">
        <title>Quinol-cytochrome c oxidoreductase and cytochrome c4 mediate electron transfer during selenate respiration in Thauera selenatis.</title>
        <authorList>
            <person name="Lowe E.C."/>
            <person name="Bydder S."/>
            <person name="Hartshorne R.S."/>
            <person name="Tape H.L."/>
            <person name="Dridge E.J."/>
            <person name="Debieux C.M."/>
            <person name="Paszkiewicz K."/>
            <person name="Singleton I."/>
            <person name="Lewis R.J."/>
            <person name="Santini J.M."/>
            <person name="Richardson D.J."/>
            <person name="Butler C.S."/>
        </authorList>
    </citation>
    <scope>FUNCTION</scope>
    <scope>CATALYTIC ACTIVITY</scope>
    <scope>SUBUNIT</scope>
</reference>
<keyword id="KW-0003">3Fe-4S</keyword>
<keyword id="KW-0004">4Fe-4S</keyword>
<keyword id="KW-0903">Direct protein sequencing</keyword>
<keyword id="KW-0249">Electron transport</keyword>
<keyword id="KW-0408">Iron</keyword>
<keyword id="KW-0411">Iron-sulfur</keyword>
<keyword id="KW-0479">Metal-binding</keyword>
<keyword id="KW-0560">Oxidoreductase</keyword>
<keyword id="KW-0574">Periplasm</keyword>
<keyword id="KW-0677">Repeat</keyword>
<keyword id="KW-0813">Transport</keyword>
<evidence type="ECO:0000250" key="1">
    <source>
        <dbReference type="UniProtKB" id="P11349"/>
    </source>
</evidence>
<evidence type="ECO:0000255" key="2">
    <source>
        <dbReference type="PROSITE-ProRule" id="PRU00711"/>
    </source>
</evidence>
<evidence type="ECO:0000269" key="3">
    <source>
    </source>
</evidence>
<evidence type="ECO:0000269" key="4">
    <source>
    </source>
</evidence>
<evidence type="ECO:0000269" key="5">
    <source>
    </source>
</evidence>
<evidence type="ECO:0000269" key="6">
    <source>
    </source>
</evidence>
<evidence type="ECO:0000269" key="7">
    <source>
    </source>
</evidence>
<evidence type="ECO:0000303" key="8">
    <source>
    </source>
</evidence>
<evidence type="ECO:0000303" key="9">
    <source>
    </source>
</evidence>
<evidence type="ECO:0000303" key="10">
    <source>
    </source>
</evidence>
<evidence type="ECO:0000305" key="11">
    <source>
    </source>
</evidence>
<evidence type="ECO:0000305" key="12">
    <source>
    </source>
</evidence>
<evidence type="ECO:0000305" key="13">
    <source>
    </source>
</evidence>
<accession>Q9S1G9</accession>
<proteinExistence type="evidence at protein level"/>
<gene>
    <name evidence="8" type="primary">serB</name>
</gene>
<name>SERB_THASE</name>
<protein>
    <recommendedName>
        <fullName evidence="10">Selenate reductase subunit beta</fullName>
        <shortName evidence="9">SER subunit beta</shortName>
        <ecNumber evidence="5">1.97.1.9</ecNumber>
    </recommendedName>
    <alternativeName>
        <fullName>Selenate reductase iron-sulfur subunit</fullName>
    </alternativeName>
</protein>
<organism>
    <name type="scientific">Thauera selenatis</name>
    <dbReference type="NCBI Taxonomy" id="33058"/>
    <lineage>
        <taxon>Bacteria</taxon>
        <taxon>Pseudomonadati</taxon>
        <taxon>Pseudomonadota</taxon>
        <taxon>Betaproteobacteria</taxon>
        <taxon>Rhodocyclales</taxon>
        <taxon>Zoogloeaceae</taxon>
        <taxon>Thauera</taxon>
    </lineage>
</organism>
<comment type="function">
    <text evidence="5 6 7 12">Component of the selenate reductase, which catalyzes the reduction of selenate to selenite and allows anaerobic growth with selenate as the sole terminal electron acceptor (PubMed:20388716, PubMed:20547201, PubMed:9295321). A c-type di-heme cytochrome of the cytc4 family was shown to donate electrons to the selenate reductase in vitro (PubMed:20388716). SerABC can also use reduced benzyl viologen or reduced methyl viologen as an electron donor (PubMed:20547201, PubMed:9295321). This subunit transfers electrons from SerC to SerA (Probable). The reductase is specific for selenate, and cannot reduce nitrate, nitrite, chlorate or sulfate (PubMed:9295321).</text>
</comment>
<comment type="catalytic activity">
    <reaction evidence="5">
        <text>selenite + 2 Fe(III)-[cytochrome c] + H2O = 2 Fe(II)-[cytochrome] + selenate + 2 H(+)</text>
        <dbReference type="Rhea" id="RHEA:80603"/>
        <dbReference type="Rhea" id="RHEA-COMP:11778"/>
        <dbReference type="Rhea" id="RHEA-COMP:14399"/>
        <dbReference type="ChEBI" id="CHEBI:15075"/>
        <dbReference type="ChEBI" id="CHEBI:15377"/>
        <dbReference type="ChEBI" id="CHEBI:15378"/>
        <dbReference type="ChEBI" id="CHEBI:18212"/>
        <dbReference type="ChEBI" id="CHEBI:29033"/>
        <dbReference type="ChEBI" id="CHEBI:29034"/>
        <dbReference type="EC" id="1.97.1.9"/>
    </reaction>
    <physiologicalReaction direction="right-to-left" evidence="5">
        <dbReference type="Rhea" id="RHEA:80605"/>
    </physiologicalReaction>
</comment>
<comment type="cofactor">
    <cofactor evidence="1">
        <name>[3Fe-4S] cluster</name>
        <dbReference type="ChEBI" id="CHEBI:21137"/>
    </cofactor>
    <text evidence="1">Binds 1 [3Fe-4S] cluster.</text>
</comment>
<comment type="cofactor">
    <cofactor evidence="1">
        <name>[4Fe-4S] cluster</name>
        <dbReference type="ChEBI" id="CHEBI:49883"/>
    </cofactor>
    <text evidence="1">Binds 3 [4Fe-4S] clusters.</text>
</comment>
<comment type="activity regulation">
    <text evidence="6">Enzyme isolated from cells grown in a tungstate rich environment shows a 20-fold reduction in selenate reductase activity.</text>
</comment>
<comment type="biophysicochemical properties">
    <kinetics>
        <KM evidence="7">16 uM for selenate (with reduced benzyl viologen as the electron donor)</KM>
        <KM evidence="6">16 uM for selenate (in the presence of molybdenum, with reduced methyl viologen as the electron donor)</KM>
        <KM evidence="6">0.7 uM for selenate (in the presence of tungsten, with reduced methyl viologen as the electron donor)</KM>
        <Vmax evidence="7">40.0 umol/min/mg enzyme (with reduced benzyl viologen as the electron donor)</Vmax>
        <Vmax evidence="6">0.2 umol/min/mg enzyme (in the presence of molybdenum, with reduced methyl viologen as the electron donor)</Vmax>
        <Vmax evidence="6">0.01 umol/min/mg enzyme (in the presence of tungsten, with reduced methyl viologen as the electron donor)</Vmax>
        <text evidence="7">kcat is 387 sec(-1) (with reduced benzyl viologen as the electron donor).</text>
    </kinetics>
    <phDependence>
        <text evidence="6 7">Optimum pH is 6.0 (PubMed:9295321). Activity is also optimum at pH 6.0 in the presence of tungsten (PubMed:20547201).</text>
    </phDependence>
    <temperatureDependence>
        <text evidence="6">Optimum temperature is 65 degrees Celsius (with reduced methyl viologen as the electron donor). Full activity is maintained up to 60 degrees Celsius, with activity falling to 25% at 70 degrees Celsius (PubMed:20547201). Substituting tungsten for molybdenum at the active site of SerA decreases the overall stability of the SerABC complex, rendering the components less thermostable (PubMed:20547201).</text>
    </temperatureDependence>
</comment>
<comment type="subunit">
    <text evidence="3 5 6 7">Heterotrimer of alpha (SerA), beta (SerB) and gamma (SerC) subunits.</text>
</comment>
<comment type="subcellular location">
    <subcellularLocation>
        <location evidence="4 6 7">Periplasm</location>
    </subcellularLocation>
    <text evidence="11">Probably translocated together with SerA, which possesses a Tat-type signal.</text>
</comment>
<comment type="biotechnology">
    <text evidence="13">Has potential use in bioremediation of waste sites contaminated with selenate, such as agricultural drainage waters.</text>
</comment>
<feature type="initiator methionine" description="Removed" evidence="7">
    <location>
        <position position="1"/>
    </location>
</feature>
<feature type="chain" id="PRO_0000159293" description="Selenate reductase subunit beta">
    <location>
        <begin position="2"/>
        <end position="327"/>
    </location>
</feature>
<feature type="domain" description="4Fe-4S ferredoxin-type 1" evidence="2">
    <location>
        <begin position="6"/>
        <end position="35"/>
    </location>
</feature>
<feature type="domain" description="4Fe-4S ferredoxin-type 2" evidence="2">
    <location>
        <begin position="124"/>
        <end position="155"/>
    </location>
</feature>
<feature type="domain" description="4Fe-4S ferredoxin-type 3" evidence="2">
    <location>
        <begin position="157"/>
        <end position="186"/>
    </location>
</feature>
<feature type="binding site" evidence="1">
    <location>
        <position position="15"/>
    </location>
    <ligand>
        <name>[4Fe-4S] cluster</name>
        <dbReference type="ChEBI" id="CHEBI:49883"/>
        <label>1</label>
    </ligand>
</feature>
<feature type="binding site" evidence="1">
    <location>
        <position position="18"/>
    </location>
    <ligand>
        <name>[4Fe-4S] cluster</name>
        <dbReference type="ChEBI" id="CHEBI:49883"/>
        <label>1</label>
    </ligand>
</feature>
<feature type="binding site" evidence="1">
    <location>
        <position position="21"/>
    </location>
    <ligand>
        <name>[4Fe-4S] cluster</name>
        <dbReference type="ChEBI" id="CHEBI:49883"/>
        <label>1</label>
    </ligand>
</feature>
<feature type="binding site" evidence="1">
    <location>
        <position position="25"/>
    </location>
    <ligand>
        <name>[4Fe-4S] cluster</name>
        <dbReference type="ChEBI" id="CHEBI:49883"/>
        <label>2</label>
    </ligand>
</feature>
<feature type="binding site" evidence="1">
    <location>
        <position position="133"/>
    </location>
    <ligand>
        <name>[4Fe-4S] cluster</name>
        <dbReference type="ChEBI" id="CHEBI:49883"/>
        <label>3</label>
    </ligand>
</feature>
<feature type="binding site" evidence="1">
    <location>
        <position position="136"/>
    </location>
    <ligand>
        <name>[4Fe-4S] cluster</name>
        <dbReference type="ChEBI" id="CHEBI:49883"/>
        <label>3</label>
    </ligand>
</feature>
<feature type="binding site" evidence="1">
    <location>
        <position position="141"/>
    </location>
    <ligand>
        <name>[4Fe-4S] cluster</name>
        <dbReference type="ChEBI" id="CHEBI:49883"/>
        <label>3</label>
    </ligand>
</feature>
<feature type="binding site" evidence="1">
    <location>
        <position position="145"/>
    </location>
    <ligand>
        <name>[3Fe-4S] cluster</name>
        <dbReference type="ChEBI" id="CHEBI:21137"/>
    </ligand>
</feature>
<feature type="binding site" evidence="1">
    <location>
        <position position="166"/>
    </location>
    <ligand>
        <name>[3Fe-4S] cluster</name>
        <dbReference type="ChEBI" id="CHEBI:21137"/>
    </ligand>
</feature>
<feature type="binding site" evidence="1">
    <location>
        <position position="172"/>
    </location>
    <ligand>
        <name>[3Fe-4S] cluster</name>
        <dbReference type="ChEBI" id="CHEBI:21137"/>
    </ligand>
</feature>
<feature type="binding site" evidence="1">
    <location>
        <position position="176"/>
    </location>
    <ligand>
        <name>[4Fe-4S] cluster</name>
        <dbReference type="ChEBI" id="CHEBI:49883"/>
        <label>3</label>
    </ligand>
</feature>
<feature type="binding site" evidence="1">
    <location>
        <position position="193"/>
    </location>
    <ligand>
        <name>[4Fe-4S] cluster</name>
        <dbReference type="ChEBI" id="CHEBI:49883"/>
        <label>2</label>
    </ligand>
</feature>
<feature type="binding site" evidence="1">
    <location>
        <position position="196"/>
    </location>
    <ligand>
        <name>[4Fe-4S] cluster</name>
        <dbReference type="ChEBI" id="CHEBI:49883"/>
        <label>2</label>
    </ligand>
</feature>
<feature type="binding site" evidence="1">
    <location>
        <position position="208"/>
    </location>
    <ligand>
        <name>[4Fe-4S] cluster</name>
        <dbReference type="ChEBI" id="CHEBI:49883"/>
        <label>2</label>
    </ligand>
</feature>
<feature type="binding site" evidence="1">
    <location>
        <position position="212"/>
    </location>
    <ligand>
        <name>[4Fe-4S] cluster</name>
        <dbReference type="ChEBI" id="CHEBI:49883"/>
        <label>1</label>
    </ligand>
</feature>
<sequence length="327" mass="37122">MSQRQLAYVFDLNKCIGCHTCTMACKQLWTNRDGREYMYWNNVESRPGKGYPKNWEQKGGGFDKDGKLKTNGIIPIRADYGGTWNYNLLETLVEGKSNQVVPDEKPTWGPNWDEDEGKGEFPNNHYFYLPRICNHCSNPACLAACPTKAIYKREEDGLVVVDQSRCKGYRYCVKACPYGKMYFNLQKGTSEKCIGCYPRVEKGEAPACVKQCSGRIRFWGYRDDKDGPIYKLVDQWKVALPLHAEYGTEPNVFYVPPMNTTPPPFEEDGRLGDKPRIPIEDLEALFGPGVKQALATLGGEMAKRRKAQASELTDILIGYTNKDRYGI</sequence>